<feature type="chain" id="PRO_0000348959" description="Keratin-associated protein 16-1">
    <location>
        <begin position="1"/>
        <end position="517"/>
    </location>
</feature>
<feature type="repeat" description="1">
    <location>
        <begin position="73"/>
        <end position="77"/>
    </location>
</feature>
<feature type="repeat" description="2">
    <location>
        <begin position="93"/>
        <end position="97"/>
    </location>
</feature>
<feature type="repeat" description="3">
    <location>
        <begin position="128"/>
        <end position="132"/>
    </location>
</feature>
<feature type="repeat" description="4">
    <location>
        <begin position="153"/>
        <end position="157"/>
    </location>
</feature>
<feature type="repeat" description="5">
    <location>
        <begin position="168"/>
        <end position="172"/>
    </location>
</feature>
<feature type="repeat" description="6">
    <location>
        <begin position="198"/>
        <end position="202"/>
    </location>
</feature>
<feature type="repeat" description="7">
    <location>
        <begin position="208"/>
        <end position="212"/>
    </location>
</feature>
<feature type="repeat" description="8">
    <location>
        <begin position="228"/>
        <end position="232"/>
    </location>
</feature>
<feature type="repeat" description="9">
    <location>
        <begin position="248"/>
        <end position="252"/>
    </location>
</feature>
<feature type="repeat" description="10">
    <location>
        <begin position="283"/>
        <end position="287"/>
    </location>
</feature>
<feature type="repeat" description="11">
    <location>
        <begin position="303"/>
        <end position="307"/>
    </location>
</feature>
<feature type="region of interest" description="11 X 5 AA repeats of C-C-X(3)">
    <location>
        <begin position="73"/>
        <end position="307"/>
    </location>
</feature>
<feature type="region of interest" description="Disordered" evidence="1">
    <location>
        <begin position="483"/>
        <end position="517"/>
    </location>
</feature>
<feature type="compositionally biased region" description="Low complexity" evidence="1">
    <location>
        <begin position="504"/>
        <end position="517"/>
    </location>
</feature>
<reference key="1">
    <citation type="journal article" date="2006" name="Nature">
        <title>DNA sequence of human chromosome 17 and analysis of rearrangement in the human lineage.</title>
        <authorList>
            <person name="Zody M.C."/>
            <person name="Garber M."/>
            <person name="Adams D.J."/>
            <person name="Sharpe T."/>
            <person name="Harrow J."/>
            <person name="Lupski J.R."/>
            <person name="Nicholson C."/>
            <person name="Searle S.M."/>
            <person name="Wilming L."/>
            <person name="Young S.K."/>
            <person name="Abouelleil A."/>
            <person name="Allen N.R."/>
            <person name="Bi W."/>
            <person name="Bloom T."/>
            <person name="Borowsky M.L."/>
            <person name="Bugalter B.E."/>
            <person name="Butler J."/>
            <person name="Chang J.L."/>
            <person name="Chen C.-K."/>
            <person name="Cook A."/>
            <person name="Corum B."/>
            <person name="Cuomo C.A."/>
            <person name="de Jong P.J."/>
            <person name="DeCaprio D."/>
            <person name="Dewar K."/>
            <person name="FitzGerald M."/>
            <person name="Gilbert J."/>
            <person name="Gibson R."/>
            <person name="Gnerre S."/>
            <person name="Goldstein S."/>
            <person name="Grafham D.V."/>
            <person name="Grocock R."/>
            <person name="Hafez N."/>
            <person name="Hagopian D.S."/>
            <person name="Hart E."/>
            <person name="Norman C.H."/>
            <person name="Humphray S."/>
            <person name="Jaffe D.B."/>
            <person name="Jones M."/>
            <person name="Kamal M."/>
            <person name="Khodiyar V.K."/>
            <person name="LaButti K."/>
            <person name="Laird G."/>
            <person name="Lehoczky J."/>
            <person name="Liu X."/>
            <person name="Lokyitsang T."/>
            <person name="Loveland J."/>
            <person name="Lui A."/>
            <person name="Macdonald P."/>
            <person name="Major J.E."/>
            <person name="Matthews L."/>
            <person name="Mauceli E."/>
            <person name="McCarroll S.A."/>
            <person name="Mihalev A.H."/>
            <person name="Mudge J."/>
            <person name="Nguyen C."/>
            <person name="Nicol R."/>
            <person name="O'Leary S.B."/>
            <person name="Osoegawa K."/>
            <person name="Schwartz D.C."/>
            <person name="Shaw-Smith C."/>
            <person name="Stankiewicz P."/>
            <person name="Steward C."/>
            <person name="Swarbreck D."/>
            <person name="Venkataraman V."/>
            <person name="Whittaker C.A."/>
            <person name="Yang X."/>
            <person name="Zimmer A.R."/>
            <person name="Bradley A."/>
            <person name="Hubbard T."/>
            <person name="Birren B.W."/>
            <person name="Rogers J."/>
            <person name="Lander E.S."/>
            <person name="Nusbaum C."/>
        </authorList>
    </citation>
    <scope>NUCLEOTIDE SEQUENCE [LARGE SCALE GENOMIC DNA]</scope>
</reference>
<reference key="2">
    <citation type="submission" date="2005-07" db="EMBL/GenBank/DDBJ databases">
        <authorList>
            <person name="Mural R.J."/>
            <person name="Istrail S."/>
            <person name="Sutton G.G."/>
            <person name="Florea L."/>
            <person name="Halpern A.L."/>
            <person name="Mobarry C.M."/>
            <person name="Lippert R."/>
            <person name="Walenz B."/>
            <person name="Shatkay H."/>
            <person name="Dew I."/>
            <person name="Miller J.R."/>
            <person name="Flanigan M.J."/>
            <person name="Edwards N.J."/>
            <person name="Bolanos R."/>
            <person name="Fasulo D."/>
            <person name="Halldorsson B.V."/>
            <person name="Hannenhalli S."/>
            <person name="Turner R."/>
            <person name="Yooseph S."/>
            <person name="Lu F."/>
            <person name="Nusskern D.R."/>
            <person name="Shue B.C."/>
            <person name="Zheng X.H."/>
            <person name="Zhong F."/>
            <person name="Delcher A.L."/>
            <person name="Huson D.H."/>
            <person name="Kravitz S.A."/>
            <person name="Mouchard L."/>
            <person name="Reinert K."/>
            <person name="Remington K.A."/>
            <person name="Clark A.G."/>
            <person name="Waterman M.S."/>
            <person name="Eichler E.E."/>
            <person name="Adams M.D."/>
            <person name="Hunkapiller M.W."/>
            <person name="Myers E.W."/>
            <person name="Venter J.C."/>
        </authorList>
    </citation>
    <scope>NUCLEOTIDE SEQUENCE [LARGE SCALE GENOMIC DNA]</scope>
</reference>
<keyword id="KW-0416">Keratin</keyword>
<keyword id="KW-1267">Proteomics identification</keyword>
<keyword id="KW-1185">Reference proteome</keyword>
<keyword id="KW-0677">Repeat</keyword>
<comment type="similarity">
    <text evidence="2">Belongs to the KRTAP type 16 family.</text>
</comment>
<evidence type="ECO:0000256" key="1">
    <source>
        <dbReference type="SAM" id="MobiDB-lite"/>
    </source>
</evidence>
<evidence type="ECO:0000305" key="2"/>
<protein>
    <recommendedName>
        <fullName>Keratin-associated protein 16-1</fullName>
    </recommendedName>
</protein>
<proteinExistence type="evidence at protein level"/>
<name>KR161_HUMAN</name>
<sequence>MSGSCSSRKCFSVPATSLCSTEVSCGGPICLPSSCQSQTWQLVTCQDSCGSSSCGPQCRQPSCPVSSCAQPLCCDPVICEPSCSVSSGCQPVCCEATTCEPSCSVSNCYQPVCFEATICEPSCSVSNCCQPVCFEATVCEPSCSVSSCAQPVCCEPAICEPSCSVSSCCQPVGSEATSCQPVLCVPTSCQPVLCKSSCCQPVVCEPSCCSAVCTLPSSCQPVVCEPSCCQPVCPTPTCSVTSSCQAVCCDPSPCEPSCSESSICQPATCVALVCEPVCLRPVCCVQSSCEPPSVPSTCQEPSCCVSSICQPICSEPSPCSPAVCVSSPCQPTCYVVKRCPSVCPEPVSCPSTSCRPLSCSPGSSASAICRPTCPRTFYIPSSSKRPCSATISYRPVSRPICRPICSGLLTYRQPYMTSISYRPACYRPCYSILRRPACVTSYSCRPVYFRPSCTESDSCKRDCKKSTSSQLDCVDTTPCKVDVSEEAPCQPTEAKPISPTTREAAAAQPAASKPANC</sequence>
<accession>A8MUX0</accession>
<gene>
    <name type="primary">KRTAP16-1</name>
    <name type="synonym">KAP16.1</name>
</gene>
<dbReference type="EMBL" id="AC003958">
    <property type="status" value="NOT_ANNOTATED_CDS"/>
    <property type="molecule type" value="Genomic_DNA"/>
</dbReference>
<dbReference type="EMBL" id="CH471152">
    <property type="protein sequence ID" value="EAW60725.1"/>
    <property type="molecule type" value="Genomic_DNA"/>
</dbReference>
<dbReference type="CCDS" id="CCDS56032.1"/>
<dbReference type="RefSeq" id="NP_001139654.1">
    <property type="nucleotide sequence ID" value="NM_001146182.2"/>
</dbReference>
<dbReference type="BioGRID" id="394227">
    <property type="interactions" value="1"/>
</dbReference>
<dbReference type="FunCoup" id="A8MUX0">
    <property type="interactions" value="1"/>
</dbReference>
<dbReference type="STRING" id="9606.ENSP00000375147"/>
<dbReference type="GlyGen" id="A8MUX0">
    <property type="glycosylation" value="2 sites"/>
</dbReference>
<dbReference type="PhosphoSitePlus" id="A8MUX0"/>
<dbReference type="BioMuta" id="KRTAP16-1"/>
<dbReference type="MassIVE" id="A8MUX0"/>
<dbReference type="PaxDb" id="9606-ENSP00000375147"/>
<dbReference type="PeptideAtlas" id="A8MUX0"/>
<dbReference type="Antibodypedia" id="77982">
    <property type="antibodies" value="5 antibodies from 5 providers"/>
</dbReference>
<dbReference type="DNASU" id="100505753"/>
<dbReference type="Ensembl" id="ENST00000391352.2">
    <property type="protein sequence ID" value="ENSP00000375147.1"/>
    <property type="gene ID" value="ENSG00000212657.2"/>
</dbReference>
<dbReference type="Ensembl" id="ENST00000572734.1">
    <property type="protein sequence ID" value="ENSP00000460805.1"/>
    <property type="gene ID" value="ENSG00000263186.1"/>
</dbReference>
<dbReference type="Ensembl" id="ENST00000709607.1">
    <property type="protein sequence ID" value="ENSP00000517794.1"/>
    <property type="gene ID" value="ENSG00000292043.1"/>
</dbReference>
<dbReference type="GeneID" id="100505753"/>
<dbReference type="KEGG" id="hsa:100505753"/>
<dbReference type="MANE-Select" id="ENST00000391352.2">
    <property type="protein sequence ID" value="ENSP00000375147.1"/>
    <property type="RefSeq nucleotide sequence ID" value="NM_001146182.2"/>
    <property type="RefSeq protein sequence ID" value="NP_001139654.1"/>
</dbReference>
<dbReference type="UCSC" id="uc021txi.1">
    <property type="organism name" value="human"/>
</dbReference>
<dbReference type="AGR" id="HGNC:18916"/>
<dbReference type="CTD" id="100505753"/>
<dbReference type="GeneCards" id="KRTAP16-1"/>
<dbReference type="HGNC" id="HGNC:18916">
    <property type="gene designation" value="KRTAP16-1"/>
</dbReference>
<dbReference type="HPA" id="ENSG00000212657">
    <property type="expression patterns" value="Tissue enriched (skin)"/>
</dbReference>
<dbReference type="neXtProt" id="NX_A8MUX0"/>
<dbReference type="PharmGKB" id="PA134895884"/>
<dbReference type="VEuPathDB" id="HostDB:ENSG00000212657"/>
<dbReference type="eggNOG" id="KOG4726">
    <property type="taxonomic scope" value="Eukaryota"/>
</dbReference>
<dbReference type="GeneTree" id="ENSGT00940000163658"/>
<dbReference type="HOGENOM" id="CLU_573136_0_0_1"/>
<dbReference type="InParanoid" id="A8MUX0"/>
<dbReference type="OMA" id="VICEPSC"/>
<dbReference type="OrthoDB" id="9451506at2759"/>
<dbReference type="PAN-GO" id="A8MUX0">
    <property type="GO annotations" value="0 GO annotations based on evolutionary models"/>
</dbReference>
<dbReference type="PhylomeDB" id="A8MUX0"/>
<dbReference type="PathwayCommons" id="A8MUX0"/>
<dbReference type="Reactome" id="R-HSA-6805567">
    <property type="pathway name" value="Keratinization"/>
</dbReference>
<dbReference type="SignaLink" id="A8MUX0"/>
<dbReference type="BioGRID-ORCS" id="100505753">
    <property type="hits" value="9 hits in 1132 CRISPR screens"/>
</dbReference>
<dbReference type="Pharos" id="A8MUX0">
    <property type="development level" value="Tdark"/>
</dbReference>
<dbReference type="PRO" id="PR:A8MUX0"/>
<dbReference type="Proteomes" id="UP000005640">
    <property type="component" value="Chromosome 17"/>
</dbReference>
<dbReference type="RNAct" id="A8MUX0">
    <property type="molecule type" value="protein"/>
</dbReference>
<dbReference type="Bgee" id="ENSG00000212657">
    <property type="expression patterns" value="Expressed in granulocyte and 15 other cell types or tissues"/>
</dbReference>
<dbReference type="GO" id="GO:0005829">
    <property type="term" value="C:cytosol"/>
    <property type="evidence" value="ECO:0000304"/>
    <property type="project" value="Reactome"/>
</dbReference>
<dbReference type="GO" id="GO:0045095">
    <property type="term" value="C:keratin filament"/>
    <property type="evidence" value="ECO:0007669"/>
    <property type="project" value="InterPro"/>
</dbReference>
<dbReference type="GO" id="GO:0005198">
    <property type="term" value="F:structural molecule activity"/>
    <property type="evidence" value="ECO:0007669"/>
    <property type="project" value="InterPro"/>
</dbReference>
<dbReference type="InterPro" id="IPR002494">
    <property type="entry name" value="KAP"/>
</dbReference>
<dbReference type="InterPro" id="IPR007659">
    <property type="entry name" value="Keratin_matx"/>
</dbReference>
<dbReference type="PANTHER" id="PTHR23260">
    <property type="entry name" value="KERATIN ASSOCIATED PROTEIN 3-3-RELATED"/>
    <property type="match status" value="1"/>
</dbReference>
<dbReference type="PANTHER" id="PTHR23260:SF7">
    <property type="entry name" value="KERATIN-ASSOCIATED PROTEIN 26-1"/>
    <property type="match status" value="1"/>
</dbReference>
<dbReference type="Pfam" id="PF13885">
    <property type="entry name" value="Keratin_B2_2"/>
    <property type="match status" value="5"/>
</dbReference>
<organism>
    <name type="scientific">Homo sapiens</name>
    <name type="common">Human</name>
    <dbReference type="NCBI Taxonomy" id="9606"/>
    <lineage>
        <taxon>Eukaryota</taxon>
        <taxon>Metazoa</taxon>
        <taxon>Chordata</taxon>
        <taxon>Craniata</taxon>
        <taxon>Vertebrata</taxon>
        <taxon>Euteleostomi</taxon>
        <taxon>Mammalia</taxon>
        <taxon>Eutheria</taxon>
        <taxon>Euarchontoglires</taxon>
        <taxon>Primates</taxon>
        <taxon>Haplorrhini</taxon>
        <taxon>Catarrhini</taxon>
        <taxon>Hominidae</taxon>
        <taxon>Homo</taxon>
    </lineage>
</organism>